<keyword id="KW-0535">Nitrogen fixation</keyword>
<feature type="chain" id="PRO_0000153116" description="Nitrogenase iron-molybdenum cofactor biosynthesis protein NifE">
    <location>
        <begin position="1"/>
        <end position="463" status="greater than"/>
    </location>
</feature>
<feature type="non-terminal residue">
    <location>
        <position position="463"/>
    </location>
</feature>
<accession>P51755</accession>
<sequence length="463" mass="51150">MKEKIGIVDTLEERKPYITRKQEKGQEIPLGCDNNSLAGAISQRACVYSGARVVLNPVTDAVHLVHGPIGCAGYTWDIRGAKSSGIETNRTSFSTDMKEIDVVFGGEKKLSNAIDELVEVYHPPVILVYSTCIVGIIGDDLESVCKTASQKHTIHVTPVKSEGFNGNKSDGYKAACDALKRLIKRPSEDEIKKKAPRVPETIKPKINILGDFNVAGDVWLVNPLFEQMGIEVIVSMTGDSTPKAISRAAEADLNLVQCSGSMTYLPKWMQAEYGIPYLNASFFGIEDISLALRRTADYFGSEEIKKRAEQILETEINRIMPEISRVREKVKGKKAAIYMGGPAKALTLIKGFDELGMEVVIIGTQTGKKEDYEQISYSVRDGTVIVDDANPLELAELLIRQKADLMVAGVKERFIAYKLGIAFCDFNHDRVVEFEGFDGFVNFAREVDASISSPVWKAVRQRI</sequence>
<dbReference type="EMBL" id="U32665">
    <property type="protein sequence ID" value="AAA96015.1"/>
    <property type="molecule type" value="Genomic_DNA"/>
</dbReference>
<dbReference type="SMR" id="P51755"/>
<dbReference type="UniPathway" id="UPA00782"/>
<dbReference type="GO" id="GO:0016163">
    <property type="term" value="F:nitrogenase activity"/>
    <property type="evidence" value="ECO:0007669"/>
    <property type="project" value="InterPro"/>
</dbReference>
<dbReference type="GO" id="GO:0009399">
    <property type="term" value="P:nitrogen fixation"/>
    <property type="evidence" value="ECO:0007669"/>
    <property type="project" value="UniProtKB-KW"/>
</dbReference>
<dbReference type="GO" id="GO:0065003">
    <property type="term" value="P:protein-containing complex assembly"/>
    <property type="evidence" value="ECO:0007669"/>
    <property type="project" value="InterPro"/>
</dbReference>
<dbReference type="Gene3D" id="3.40.50.12380">
    <property type="entry name" value="Nitrogenase MoFe cofactor biosynthesis protein NifE, C-terminal"/>
    <property type="match status" value="1"/>
</dbReference>
<dbReference type="Gene3D" id="3.40.50.1980">
    <property type="entry name" value="Nitrogenase molybdenum iron protein domain"/>
    <property type="match status" value="1"/>
</dbReference>
<dbReference type="InterPro" id="IPR000510">
    <property type="entry name" value="Nase/OxRdtase_comp1"/>
</dbReference>
<dbReference type="InterPro" id="IPR000318">
    <property type="entry name" value="Nase_comp1_CS"/>
</dbReference>
<dbReference type="InterPro" id="IPR005973">
    <property type="entry name" value="NifE"/>
</dbReference>
<dbReference type="InterPro" id="IPR049939">
    <property type="entry name" value="NifE-like"/>
</dbReference>
<dbReference type="NCBIfam" id="TIGR01283">
    <property type="entry name" value="nifE"/>
    <property type="match status" value="1"/>
</dbReference>
<dbReference type="PANTHER" id="PTHR42956">
    <property type="entry name" value="NITROGENASE IRON-MOLYBDENUM COFACTOR BIOSYNTHESIS PROTEIN NIFE"/>
    <property type="match status" value="1"/>
</dbReference>
<dbReference type="PANTHER" id="PTHR42956:SF1">
    <property type="entry name" value="NITROGENASE IRON-MOLYBDENUM COFACTOR BIOSYNTHESIS PROTEIN NIFE"/>
    <property type="match status" value="1"/>
</dbReference>
<dbReference type="Pfam" id="PF00148">
    <property type="entry name" value="Oxidored_nitro"/>
    <property type="match status" value="1"/>
</dbReference>
<dbReference type="SUPFAM" id="SSF53807">
    <property type="entry name" value="Helical backbone' metal receptor"/>
    <property type="match status" value="1"/>
</dbReference>
<dbReference type="PROSITE" id="PS00699">
    <property type="entry name" value="NITROGENASE_1_1"/>
    <property type="match status" value="1"/>
</dbReference>
<dbReference type="PROSITE" id="PS00090">
    <property type="entry name" value="NITROGENASE_1_2"/>
    <property type="match status" value="1"/>
</dbReference>
<protein>
    <recommendedName>
        <fullName>Nitrogenase iron-molybdenum cofactor biosynthesis protein NifE</fullName>
    </recommendedName>
</protein>
<proteinExistence type="inferred from homology"/>
<comment type="function">
    <text>This protein may play a role in the biosynthesis of the prosthetic group of nitrogenase (FeMo cofactor).</text>
</comment>
<comment type="pathway">
    <text>Cofactor biosynthesis; Fe-Mo cofactor biosynthesis.</text>
</comment>
<comment type="similarity">
    <text evidence="1">Belongs to the NifD/NifK/NifE/NifN family.</text>
</comment>
<organism>
    <name type="scientific">Methanosarcina barkeri</name>
    <dbReference type="NCBI Taxonomy" id="2208"/>
    <lineage>
        <taxon>Archaea</taxon>
        <taxon>Methanobacteriati</taxon>
        <taxon>Methanobacteriota</taxon>
        <taxon>Stenosarchaea group</taxon>
        <taxon>Methanomicrobia</taxon>
        <taxon>Methanosarcinales</taxon>
        <taxon>Methanosarcinaceae</taxon>
        <taxon>Methanosarcina</taxon>
    </lineage>
</organism>
<reference key="1">
    <citation type="journal article" date="1996" name="J. Bacteriol.">
        <title>Cloning, functional organization, transcript studies, and phylogenetic analysis of the complete nitrogenase structural genes (nifHDK2) and associated genes in the archaeon Methanosarcina barkeri 227.</title>
        <authorList>
            <person name="Chien Y.-T."/>
            <person name="Zinder S.H."/>
        </authorList>
    </citation>
    <scope>NUCLEOTIDE SEQUENCE [GENOMIC DNA]</scope>
    <source>
        <strain>ATCC 43241 / DSM 1538 / 227</strain>
    </source>
</reference>
<evidence type="ECO:0000305" key="1"/>
<name>NIFE_METBA</name>
<gene>
    <name type="primary">nifE2</name>
</gene>